<protein>
    <recommendedName>
        <fullName>pH-response regulator protein palA/RIM20</fullName>
    </recommendedName>
</protein>
<proteinExistence type="inferred from homology"/>
<organism>
    <name type="scientific">Pyricularia oryzae (strain 70-15 / ATCC MYA-4617 / FGSC 8958)</name>
    <name type="common">Rice blast fungus</name>
    <name type="synonym">Magnaporthe oryzae</name>
    <dbReference type="NCBI Taxonomy" id="242507"/>
    <lineage>
        <taxon>Eukaryota</taxon>
        <taxon>Fungi</taxon>
        <taxon>Dikarya</taxon>
        <taxon>Ascomycota</taxon>
        <taxon>Pezizomycotina</taxon>
        <taxon>Sordariomycetes</taxon>
        <taxon>Sordariomycetidae</taxon>
        <taxon>Magnaporthales</taxon>
        <taxon>Pyriculariaceae</taxon>
        <taxon>Pyricularia</taxon>
    </lineage>
</organism>
<reference key="1">
    <citation type="journal article" date="2005" name="Nature">
        <title>The genome sequence of the rice blast fungus Magnaporthe grisea.</title>
        <authorList>
            <person name="Dean R.A."/>
            <person name="Talbot N.J."/>
            <person name="Ebbole D.J."/>
            <person name="Farman M.L."/>
            <person name="Mitchell T.K."/>
            <person name="Orbach M.J."/>
            <person name="Thon M.R."/>
            <person name="Kulkarni R."/>
            <person name="Xu J.-R."/>
            <person name="Pan H."/>
            <person name="Read N.D."/>
            <person name="Lee Y.-H."/>
            <person name="Carbone I."/>
            <person name="Brown D."/>
            <person name="Oh Y.Y."/>
            <person name="Donofrio N."/>
            <person name="Jeong J.S."/>
            <person name="Soanes D.M."/>
            <person name="Djonovic S."/>
            <person name="Kolomiets E."/>
            <person name="Rehmeyer C."/>
            <person name="Li W."/>
            <person name="Harding M."/>
            <person name="Kim S."/>
            <person name="Lebrun M.-H."/>
            <person name="Bohnert H."/>
            <person name="Coughlan S."/>
            <person name="Butler J."/>
            <person name="Calvo S.E."/>
            <person name="Ma L.-J."/>
            <person name="Nicol R."/>
            <person name="Purcell S."/>
            <person name="Nusbaum C."/>
            <person name="Galagan J.E."/>
            <person name="Birren B.W."/>
        </authorList>
    </citation>
    <scope>NUCLEOTIDE SEQUENCE [LARGE SCALE GENOMIC DNA]</scope>
    <source>
        <strain>70-15 / ATCC MYA-4617 / FGSC 8958</strain>
    </source>
</reference>
<gene>
    <name type="primary">RIM20</name>
    <name type="ORF">MGG_00833</name>
</gene>
<keyword id="KW-0175">Coiled coil</keyword>
<keyword id="KW-1185">Reference proteome</keyword>
<evidence type="ECO:0000250" key="1"/>
<evidence type="ECO:0000255" key="2"/>
<evidence type="ECO:0000255" key="3">
    <source>
        <dbReference type="PROSITE-ProRule" id="PRU00526"/>
    </source>
</evidence>
<evidence type="ECO:0000256" key="4">
    <source>
        <dbReference type="SAM" id="MobiDB-lite"/>
    </source>
</evidence>
<evidence type="ECO:0000305" key="5"/>
<sequence>MSSQSAYQLPISFRKSNQLSFAPAVRQYISNKYDQHPDMFRQDIEVIDALRRDAINVREPHTSGIRKLQAYAAQLVWISGKFPIDIGADFTWYPALGYNTDRPLVQNNLQYELLNVLYNLAALYCQLALSTNSNGDSNAIKTAANYFSHAAGVLSHMKTAVLPELRMPSPPEDMDEATLESLEQLMLAQCQECYWQKAVAEGYKDATIAKLAARASDLYNSAAEAAMKSEAISSAWIHHISAKHHHFAAAAQYRASLDCLEKRKYGEEIARLQDAVACANEGLREARGGYLKEGVAEDLRRLKMRAEEDLKRAEHDNDMLYLLPVPTKPELKILDRANLAVARIPAQVSAPVDHIGDEAEFGPALFSKLVPYAVHMAVSIYEERRDRLVNNNIIHELEVLTERMHEILSSLNLPGSLQALEKPLGLPGPLIQHAEEIRQADGINRIQRSFADIDKLRSSDIAVFEEGKSLLVTEEEEDQRLRRRHGTQRWARPESRQDPAGGQKLWAQVGEIEGYFASSTSSDGIVREKYLAIEDTLMVLSGSDRSLMDFVPSSRRTEIPESVKPALGRLRGAYNDVLRMESRRRKRVEALRERARSDDIKPDILRETGRLERAYPGTTLAAAHFDDFFERRLDSLYEDDLALLERETAEQEKCLNEVSRVNREFESQRRAAGADKAGGKEREAALQKLDSAFYKYKEIVSNVEVGRKFYNDLSKIVGTFRDTCRTWVAERRKDARSLEDEISMPPLGSLSLQQTPSQQSSQYYSQQQQQQPRSPPQEAHHSAYADTGSMPPQQPRPLPAANAQQTWSQNMPIQFGGPPGTAQQTQPAQAGAKKPVGGTWDPSAGIRFG</sequence>
<accession>Q51NJ3</accession>
<accession>A4RDY5</accession>
<accession>G4NE29</accession>
<feature type="chain" id="PRO_0000218881" description="pH-response regulator protein palA/RIM20">
    <location>
        <begin position="1"/>
        <end position="849"/>
    </location>
</feature>
<feature type="domain" description="BRO1" evidence="3">
    <location>
        <begin position="7"/>
        <end position="404"/>
    </location>
</feature>
<feature type="region of interest" description="Disordered" evidence="4">
    <location>
        <begin position="475"/>
        <end position="502"/>
    </location>
</feature>
<feature type="region of interest" description="Disordered" evidence="4">
    <location>
        <begin position="738"/>
        <end position="849"/>
    </location>
</feature>
<feature type="coiled-coil region" evidence="2">
    <location>
        <begin position="260"/>
        <end position="321"/>
    </location>
</feature>
<feature type="compositionally biased region" description="Low complexity" evidence="4">
    <location>
        <begin position="745"/>
        <end position="772"/>
    </location>
</feature>
<feature type="compositionally biased region" description="Polar residues" evidence="4">
    <location>
        <begin position="802"/>
        <end position="812"/>
    </location>
</feature>
<feature type="compositionally biased region" description="Low complexity" evidence="4">
    <location>
        <begin position="820"/>
        <end position="835"/>
    </location>
</feature>
<dbReference type="EMBL" id="CM001235">
    <property type="protein sequence ID" value="EHA48564.1"/>
    <property type="molecule type" value="Genomic_DNA"/>
</dbReference>
<dbReference type="RefSeq" id="XP_003718148.1">
    <property type="nucleotide sequence ID" value="XM_003718100.1"/>
</dbReference>
<dbReference type="SMR" id="Q51NJ3"/>
<dbReference type="FunCoup" id="Q51NJ3">
    <property type="interactions" value="1182"/>
</dbReference>
<dbReference type="STRING" id="242507.Q51NJ3"/>
<dbReference type="EnsemblFungi" id="MGG_00833T0">
    <property type="protein sequence ID" value="MGG_00833T0"/>
    <property type="gene ID" value="MGG_00833"/>
</dbReference>
<dbReference type="GeneID" id="2674260"/>
<dbReference type="KEGG" id="mgr:MGG_00833"/>
<dbReference type="VEuPathDB" id="FungiDB:MGG_00833"/>
<dbReference type="eggNOG" id="KOG2220">
    <property type="taxonomic scope" value="Eukaryota"/>
</dbReference>
<dbReference type="HOGENOM" id="CLU_007181_0_0_1"/>
<dbReference type="InParanoid" id="Q51NJ3"/>
<dbReference type="OMA" id="VSHAEEM"/>
<dbReference type="OrthoDB" id="64867at2759"/>
<dbReference type="Proteomes" id="UP000009058">
    <property type="component" value="Chromosome 5"/>
</dbReference>
<dbReference type="GO" id="GO:0005768">
    <property type="term" value="C:endosome"/>
    <property type="evidence" value="ECO:0007669"/>
    <property type="project" value="TreeGrafter"/>
</dbReference>
<dbReference type="CDD" id="cd09241">
    <property type="entry name" value="BRO1_ScRim20-like"/>
    <property type="match status" value="1"/>
</dbReference>
<dbReference type="Gene3D" id="1.20.120.560">
    <property type="entry name" value="alix/aip1 in complex with the ypdl late domain"/>
    <property type="match status" value="1"/>
</dbReference>
<dbReference type="Gene3D" id="1.20.140.50">
    <property type="entry name" value="alix/aip1 like domains"/>
    <property type="match status" value="1"/>
</dbReference>
<dbReference type="Gene3D" id="1.25.40.280">
    <property type="entry name" value="alix/aip1 like domains"/>
    <property type="match status" value="1"/>
</dbReference>
<dbReference type="InterPro" id="IPR025304">
    <property type="entry name" value="ALIX_V_dom"/>
</dbReference>
<dbReference type="InterPro" id="IPR004328">
    <property type="entry name" value="BRO1_dom"/>
</dbReference>
<dbReference type="InterPro" id="IPR038499">
    <property type="entry name" value="BRO1_sf"/>
</dbReference>
<dbReference type="PANTHER" id="PTHR23030">
    <property type="entry name" value="PCD6 INTERACTING PROTEIN-RELATED"/>
    <property type="match status" value="1"/>
</dbReference>
<dbReference type="PANTHER" id="PTHR23030:SF39">
    <property type="entry name" value="PROGRAMMED CELL DEATH 6-INTERACTING PROTEIN"/>
    <property type="match status" value="1"/>
</dbReference>
<dbReference type="Pfam" id="PF13949">
    <property type="entry name" value="ALIX_LYPXL_bnd"/>
    <property type="match status" value="1"/>
</dbReference>
<dbReference type="Pfam" id="PF03097">
    <property type="entry name" value="BRO1"/>
    <property type="match status" value="1"/>
</dbReference>
<dbReference type="SMART" id="SM01041">
    <property type="entry name" value="BRO1"/>
    <property type="match status" value="1"/>
</dbReference>
<dbReference type="PROSITE" id="PS51180">
    <property type="entry name" value="BRO1"/>
    <property type="match status" value="1"/>
</dbReference>
<comment type="function">
    <text evidence="1">Required for the proteolytic cleavage of the transcription factor RIM101 in response to alkaline ambient pH. May act as a scaffold protein that recruits the calpain-like protease RIM13 via VPS32 to its substrate RIM101 (By similarity).</text>
</comment>
<comment type="subunit">
    <text evidence="1">Interacts with RIM101 by binding to its two YPX[LI] motifs.</text>
</comment>
<comment type="similarity">
    <text evidence="5">Belongs to the palA/RIM20 family.</text>
</comment>
<name>PALA_PYRO7</name>